<name>ACT4_DROME</name>
<protein>
    <recommendedName>
        <fullName>Actin, larval muscle</fullName>
        <ecNumber evidence="4">3.6.4.-</ecNumber>
    </recommendedName>
    <alternativeName>
        <fullName>Actin-79B</fullName>
    </alternativeName>
</protein>
<dbReference type="EC" id="3.6.4.-" evidence="4"/>
<dbReference type="EMBL" id="M18827">
    <property type="protein sequence ID" value="AAA28317.1"/>
    <property type="molecule type" value="Genomic_DNA"/>
</dbReference>
<dbReference type="EMBL" id="M18828">
    <property type="protein sequence ID" value="AAA28317.1"/>
    <property type="status" value="JOINED"/>
    <property type="molecule type" value="Genomic_DNA"/>
</dbReference>
<dbReference type="EMBL" id="M18829">
    <property type="protein sequence ID" value="AAA28318.1"/>
    <property type="molecule type" value="Genomic_DNA"/>
</dbReference>
<dbReference type="EMBL" id="AE014296">
    <property type="protein sequence ID" value="AAF51800.1"/>
    <property type="molecule type" value="Genomic_DNA"/>
</dbReference>
<dbReference type="EMBL" id="AY118735">
    <property type="protein sequence ID" value="AAM50595.1"/>
    <property type="molecule type" value="mRNA"/>
</dbReference>
<dbReference type="PIR" id="A03002">
    <property type="entry name" value="ATFF7"/>
</dbReference>
<dbReference type="RefSeq" id="NP_001262200.1">
    <property type="nucleotide sequence ID" value="NM_001275271.1"/>
</dbReference>
<dbReference type="RefSeq" id="NP_524210.1">
    <property type="nucleotide sequence ID" value="NM_079486.4"/>
</dbReference>
<dbReference type="SMR" id="P02574"/>
<dbReference type="BioGRID" id="65684">
    <property type="interactions" value="43"/>
</dbReference>
<dbReference type="DIP" id="DIP-23587N"/>
<dbReference type="FunCoup" id="P02574">
    <property type="interactions" value="16"/>
</dbReference>
<dbReference type="IntAct" id="P02574">
    <property type="interactions" value="69"/>
</dbReference>
<dbReference type="STRING" id="7227.FBpp0306215"/>
<dbReference type="PaxDb" id="7227-FBpp0078131"/>
<dbReference type="DNASU" id="40444"/>
<dbReference type="EnsemblMetazoa" id="FBtr0078478">
    <property type="protein sequence ID" value="FBpp0078131"/>
    <property type="gene ID" value="FBgn0000045"/>
</dbReference>
<dbReference type="EnsemblMetazoa" id="FBtr0334090">
    <property type="protein sequence ID" value="FBpp0306215"/>
    <property type="gene ID" value="FBgn0000045"/>
</dbReference>
<dbReference type="GeneID" id="40444"/>
<dbReference type="KEGG" id="dme:Dmel_CG7478"/>
<dbReference type="AGR" id="FB:FBgn0000045"/>
<dbReference type="CTD" id="40444"/>
<dbReference type="FlyBase" id="FBgn0000045">
    <property type="gene designation" value="Act79B"/>
</dbReference>
<dbReference type="VEuPathDB" id="VectorBase:FBgn0000045"/>
<dbReference type="eggNOG" id="KOG0676">
    <property type="taxonomic scope" value="Eukaryota"/>
</dbReference>
<dbReference type="GeneTree" id="ENSGT00940000175284"/>
<dbReference type="HOGENOM" id="CLU_027965_0_2_1"/>
<dbReference type="InParanoid" id="P02574"/>
<dbReference type="OMA" id="ERFCASE"/>
<dbReference type="OrthoDB" id="422673at2759"/>
<dbReference type="PhylomeDB" id="P02574"/>
<dbReference type="Reactome" id="R-DME-445355">
    <property type="pathway name" value="Smooth Muscle Contraction"/>
</dbReference>
<dbReference type="SignaLink" id="P02574"/>
<dbReference type="BioGRID-ORCS" id="40444">
    <property type="hits" value="0 hits in 3 CRISPR screens"/>
</dbReference>
<dbReference type="ChiTaRS" id="Act79B">
    <property type="organism name" value="fly"/>
</dbReference>
<dbReference type="GenomeRNAi" id="40444"/>
<dbReference type="PRO" id="PR:P02574"/>
<dbReference type="Proteomes" id="UP000000803">
    <property type="component" value="Chromosome 3L"/>
</dbReference>
<dbReference type="Bgee" id="FBgn0000045">
    <property type="expression patterns" value="Expressed in muscle cell in insect leg and 81 other cell types or tissues"/>
</dbReference>
<dbReference type="ExpressionAtlas" id="P02574">
    <property type="expression patterns" value="baseline and differential"/>
</dbReference>
<dbReference type="GO" id="GO:0015629">
    <property type="term" value="C:actin cytoskeleton"/>
    <property type="evidence" value="ECO:0000318"/>
    <property type="project" value="GO_Central"/>
</dbReference>
<dbReference type="GO" id="GO:0005737">
    <property type="term" value="C:cytoplasm"/>
    <property type="evidence" value="ECO:0007669"/>
    <property type="project" value="UniProtKB-KW"/>
</dbReference>
<dbReference type="GO" id="GO:0005524">
    <property type="term" value="F:ATP binding"/>
    <property type="evidence" value="ECO:0007669"/>
    <property type="project" value="UniProtKB-KW"/>
</dbReference>
<dbReference type="GO" id="GO:0016787">
    <property type="term" value="F:hydrolase activity"/>
    <property type="evidence" value="ECO:0007669"/>
    <property type="project" value="UniProtKB-KW"/>
</dbReference>
<dbReference type="GO" id="GO:0000281">
    <property type="term" value="P:mitotic cytokinesis"/>
    <property type="evidence" value="ECO:0000318"/>
    <property type="project" value="GO_Central"/>
</dbReference>
<dbReference type="CDD" id="cd10224">
    <property type="entry name" value="ASKHA_NBD_actin"/>
    <property type="match status" value="1"/>
</dbReference>
<dbReference type="FunFam" id="3.30.420.40:FF:000131">
    <property type="entry name" value="Actin, alpha skeletal muscle"/>
    <property type="match status" value="1"/>
</dbReference>
<dbReference type="FunFam" id="3.30.420.40:FF:000291">
    <property type="entry name" value="Actin, alpha skeletal muscle"/>
    <property type="match status" value="1"/>
</dbReference>
<dbReference type="FunFam" id="3.90.640.10:FF:000047">
    <property type="entry name" value="Actin, alpha skeletal muscle"/>
    <property type="match status" value="1"/>
</dbReference>
<dbReference type="FunFam" id="3.30.420.40:FF:000058">
    <property type="entry name" value="Putative actin-related protein 5"/>
    <property type="match status" value="1"/>
</dbReference>
<dbReference type="Gene3D" id="3.30.420.40">
    <property type="match status" value="2"/>
</dbReference>
<dbReference type="Gene3D" id="3.90.640.10">
    <property type="entry name" value="Actin, Chain A, domain 4"/>
    <property type="match status" value="1"/>
</dbReference>
<dbReference type="InterPro" id="IPR004000">
    <property type="entry name" value="Actin"/>
</dbReference>
<dbReference type="InterPro" id="IPR020902">
    <property type="entry name" value="Actin/actin-like_CS"/>
</dbReference>
<dbReference type="InterPro" id="IPR004001">
    <property type="entry name" value="Actin_CS"/>
</dbReference>
<dbReference type="InterPro" id="IPR043129">
    <property type="entry name" value="ATPase_NBD"/>
</dbReference>
<dbReference type="PANTHER" id="PTHR11937">
    <property type="entry name" value="ACTIN"/>
    <property type="match status" value="1"/>
</dbReference>
<dbReference type="Pfam" id="PF00022">
    <property type="entry name" value="Actin"/>
    <property type="match status" value="1"/>
</dbReference>
<dbReference type="PRINTS" id="PR00190">
    <property type="entry name" value="ACTIN"/>
</dbReference>
<dbReference type="SMART" id="SM00268">
    <property type="entry name" value="ACTIN"/>
    <property type="match status" value="1"/>
</dbReference>
<dbReference type="SUPFAM" id="SSF53067">
    <property type="entry name" value="Actin-like ATPase domain"/>
    <property type="match status" value="2"/>
</dbReference>
<dbReference type="PROSITE" id="PS00406">
    <property type="entry name" value="ACTINS_1"/>
    <property type="match status" value="1"/>
</dbReference>
<dbReference type="PROSITE" id="PS00432">
    <property type="entry name" value="ACTINS_2"/>
    <property type="match status" value="1"/>
</dbReference>
<dbReference type="PROSITE" id="PS01132">
    <property type="entry name" value="ACTINS_ACT_LIKE"/>
    <property type="match status" value="1"/>
</dbReference>
<proteinExistence type="evidence at protein level"/>
<feature type="propeptide" id="PRO_0000000662" description="Removed in mature form" evidence="1">
    <location>
        <begin position="1"/>
        <end position="2"/>
    </location>
</feature>
<feature type="chain" id="PRO_0000000663" description="Actin, larval muscle">
    <location>
        <begin position="3"/>
        <end position="376"/>
    </location>
</feature>
<feature type="modified residue" description="N-acetylaspartate" evidence="1">
    <location>
        <position position="3"/>
    </location>
</feature>
<feature type="modified residue" description="Methionine sulfoxide" evidence="5">
    <location>
        <position position="45"/>
    </location>
</feature>
<feature type="modified residue" description="Methionine sulfoxide" evidence="5">
    <location>
        <position position="48"/>
    </location>
</feature>
<feature type="modified residue" description="Tele-methylhistidine" evidence="2">
    <location>
        <position position="74"/>
    </location>
</feature>
<feature type="sequence conflict" description="In Ref. 1; AAA28318." evidence="7" ref="1">
    <original>D</original>
    <variation>H</variation>
    <location>
        <position position="185"/>
    </location>
</feature>
<feature type="sequence conflict" description="In Ref. 1; AAA28317/AAA28318." evidence="7" ref="1">
    <original>I</original>
    <variation>M</variation>
    <location>
        <position position="326"/>
    </location>
</feature>
<comment type="function">
    <text>Actins are highly conserved proteins that are involved in various types of cell motility and are ubiquitously expressed in all eukaryotic cells.</text>
</comment>
<comment type="function">
    <text>Multiple isoforms are involved in various cellular functions such as cytoskeleton structure, cell mobility, chromosome movement and muscle contraction.</text>
</comment>
<comment type="catalytic activity">
    <reaction evidence="4">
        <text>ATP + H2O = ADP + phosphate + H(+)</text>
        <dbReference type="Rhea" id="RHEA:13065"/>
        <dbReference type="ChEBI" id="CHEBI:15377"/>
        <dbReference type="ChEBI" id="CHEBI:15378"/>
        <dbReference type="ChEBI" id="CHEBI:30616"/>
        <dbReference type="ChEBI" id="CHEBI:43474"/>
        <dbReference type="ChEBI" id="CHEBI:456216"/>
    </reaction>
</comment>
<comment type="interaction">
    <interactant intactId="EBI-178503">
        <id>P02574</id>
    </interactant>
    <interactant intactId="EBI-110368">
        <id>P02572</id>
        <label>Act42A</label>
    </interactant>
    <organismsDiffer>false</organismsDiffer>
    <experiments>4</experiments>
</comment>
<comment type="interaction">
    <interactant intactId="EBI-178503">
        <id>P02574</id>
    </interactant>
    <interactant intactId="EBI-135521">
        <id>P10981</id>
        <label>Act87E</label>
    </interactant>
    <organismsDiffer>false</organismsDiffer>
    <experiments>3</experiments>
</comment>
<comment type="subcellular location">
    <subcellularLocation>
        <location>Cytoplasm</location>
        <location>Cytoskeleton</location>
    </subcellularLocation>
</comment>
<comment type="developmental stage">
    <text evidence="6">Expressed during larval stages and at a lower level in pupae.</text>
</comment>
<comment type="PTM">
    <text evidence="3">N-terminal cleavage of acetylated cysteine of immature actin by ACTMAP.</text>
</comment>
<comment type="PTM">
    <text evidence="5">Oxidation of Met-45 by Mical to form methionine sulfoxide promotes actin filament depolymerization. Methionine sulfoxide is produced stereospecifically, but it is not known whether the (S)-S-oxide or the (R)-S-oxide is produced.</text>
</comment>
<comment type="miscellaneous">
    <text>In Drosophila there are 6 closely related actin genes.</text>
</comment>
<comment type="similarity">
    <text evidence="7">Belongs to the actin family.</text>
</comment>
<keyword id="KW-0007">Acetylation</keyword>
<keyword id="KW-0067">ATP-binding</keyword>
<keyword id="KW-0963">Cytoplasm</keyword>
<keyword id="KW-0206">Cytoskeleton</keyword>
<keyword id="KW-0378">Hydrolase</keyword>
<keyword id="KW-0488">Methylation</keyword>
<keyword id="KW-0514">Muscle protein</keyword>
<keyword id="KW-0547">Nucleotide-binding</keyword>
<keyword id="KW-0558">Oxidation</keyword>
<keyword id="KW-1185">Reference proteome</keyword>
<reference key="1">
    <citation type="journal article" date="1983" name="J. Mol. Biol.">
        <title>Two Drosophila actin genes in detail. Gene structure, protein structure and transcription during development.</title>
        <authorList>
            <person name="Sanchez F."/>
            <person name="Tobin S.L."/>
            <person name="Rdest U."/>
            <person name="Zulauf E."/>
            <person name="McCarthy B.J."/>
        </authorList>
    </citation>
    <scope>NUCLEOTIDE SEQUENCE [GENOMIC DNA]</scope>
    <scope>DEVELOPMENTAL STAGE</scope>
</reference>
<reference key="2">
    <citation type="journal article" date="2000" name="Science">
        <title>The genome sequence of Drosophila melanogaster.</title>
        <authorList>
            <person name="Adams M.D."/>
            <person name="Celniker S.E."/>
            <person name="Holt R.A."/>
            <person name="Evans C.A."/>
            <person name="Gocayne J.D."/>
            <person name="Amanatides P.G."/>
            <person name="Scherer S.E."/>
            <person name="Li P.W."/>
            <person name="Hoskins R.A."/>
            <person name="Galle R.F."/>
            <person name="George R.A."/>
            <person name="Lewis S.E."/>
            <person name="Richards S."/>
            <person name="Ashburner M."/>
            <person name="Henderson S.N."/>
            <person name="Sutton G.G."/>
            <person name="Wortman J.R."/>
            <person name="Yandell M.D."/>
            <person name="Zhang Q."/>
            <person name="Chen L.X."/>
            <person name="Brandon R.C."/>
            <person name="Rogers Y.-H.C."/>
            <person name="Blazej R.G."/>
            <person name="Champe M."/>
            <person name="Pfeiffer B.D."/>
            <person name="Wan K.H."/>
            <person name="Doyle C."/>
            <person name="Baxter E.G."/>
            <person name="Helt G."/>
            <person name="Nelson C.R."/>
            <person name="Miklos G.L.G."/>
            <person name="Abril J.F."/>
            <person name="Agbayani A."/>
            <person name="An H.-J."/>
            <person name="Andrews-Pfannkoch C."/>
            <person name="Baldwin D."/>
            <person name="Ballew R.M."/>
            <person name="Basu A."/>
            <person name="Baxendale J."/>
            <person name="Bayraktaroglu L."/>
            <person name="Beasley E.M."/>
            <person name="Beeson K.Y."/>
            <person name="Benos P.V."/>
            <person name="Berman B.P."/>
            <person name="Bhandari D."/>
            <person name="Bolshakov S."/>
            <person name="Borkova D."/>
            <person name="Botchan M.R."/>
            <person name="Bouck J."/>
            <person name="Brokstein P."/>
            <person name="Brottier P."/>
            <person name="Burtis K.C."/>
            <person name="Busam D.A."/>
            <person name="Butler H."/>
            <person name="Cadieu E."/>
            <person name="Center A."/>
            <person name="Chandra I."/>
            <person name="Cherry J.M."/>
            <person name="Cawley S."/>
            <person name="Dahlke C."/>
            <person name="Davenport L.B."/>
            <person name="Davies P."/>
            <person name="de Pablos B."/>
            <person name="Delcher A."/>
            <person name="Deng Z."/>
            <person name="Mays A.D."/>
            <person name="Dew I."/>
            <person name="Dietz S.M."/>
            <person name="Dodson K."/>
            <person name="Doup L.E."/>
            <person name="Downes M."/>
            <person name="Dugan-Rocha S."/>
            <person name="Dunkov B.C."/>
            <person name="Dunn P."/>
            <person name="Durbin K.J."/>
            <person name="Evangelista C.C."/>
            <person name="Ferraz C."/>
            <person name="Ferriera S."/>
            <person name="Fleischmann W."/>
            <person name="Fosler C."/>
            <person name="Gabrielian A.E."/>
            <person name="Garg N.S."/>
            <person name="Gelbart W.M."/>
            <person name="Glasser K."/>
            <person name="Glodek A."/>
            <person name="Gong F."/>
            <person name="Gorrell J.H."/>
            <person name="Gu Z."/>
            <person name="Guan P."/>
            <person name="Harris M."/>
            <person name="Harris N.L."/>
            <person name="Harvey D.A."/>
            <person name="Heiman T.J."/>
            <person name="Hernandez J.R."/>
            <person name="Houck J."/>
            <person name="Hostin D."/>
            <person name="Houston K.A."/>
            <person name="Howland T.J."/>
            <person name="Wei M.-H."/>
            <person name="Ibegwam C."/>
            <person name="Jalali M."/>
            <person name="Kalush F."/>
            <person name="Karpen G.H."/>
            <person name="Ke Z."/>
            <person name="Kennison J.A."/>
            <person name="Ketchum K.A."/>
            <person name="Kimmel B.E."/>
            <person name="Kodira C.D."/>
            <person name="Kraft C.L."/>
            <person name="Kravitz S."/>
            <person name="Kulp D."/>
            <person name="Lai Z."/>
            <person name="Lasko P."/>
            <person name="Lei Y."/>
            <person name="Levitsky A.A."/>
            <person name="Li J.H."/>
            <person name="Li Z."/>
            <person name="Liang Y."/>
            <person name="Lin X."/>
            <person name="Liu X."/>
            <person name="Mattei B."/>
            <person name="McIntosh T.C."/>
            <person name="McLeod M.P."/>
            <person name="McPherson D."/>
            <person name="Merkulov G."/>
            <person name="Milshina N.V."/>
            <person name="Mobarry C."/>
            <person name="Morris J."/>
            <person name="Moshrefi A."/>
            <person name="Mount S.M."/>
            <person name="Moy M."/>
            <person name="Murphy B."/>
            <person name="Murphy L."/>
            <person name="Muzny D.M."/>
            <person name="Nelson D.L."/>
            <person name="Nelson D.R."/>
            <person name="Nelson K.A."/>
            <person name="Nixon K."/>
            <person name="Nusskern D.R."/>
            <person name="Pacleb J.M."/>
            <person name="Palazzolo M."/>
            <person name="Pittman G.S."/>
            <person name="Pan S."/>
            <person name="Pollard J."/>
            <person name="Puri V."/>
            <person name="Reese M.G."/>
            <person name="Reinert K."/>
            <person name="Remington K."/>
            <person name="Saunders R.D.C."/>
            <person name="Scheeler F."/>
            <person name="Shen H."/>
            <person name="Shue B.C."/>
            <person name="Siden-Kiamos I."/>
            <person name="Simpson M."/>
            <person name="Skupski M.P."/>
            <person name="Smith T.J."/>
            <person name="Spier E."/>
            <person name="Spradling A.C."/>
            <person name="Stapleton M."/>
            <person name="Strong R."/>
            <person name="Sun E."/>
            <person name="Svirskas R."/>
            <person name="Tector C."/>
            <person name="Turner R."/>
            <person name="Venter E."/>
            <person name="Wang A.H."/>
            <person name="Wang X."/>
            <person name="Wang Z.-Y."/>
            <person name="Wassarman D.A."/>
            <person name="Weinstock G.M."/>
            <person name="Weissenbach J."/>
            <person name="Williams S.M."/>
            <person name="Woodage T."/>
            <person name="Worley K.C."/>
            <person name="Wu D."/>
            <person name="Yang S."/>
            <person name="Yao Q.A."/>
            <person name="Ye J."/>
            <person name="Yeh R.-F."/>
            <person name="Zaveri J.S."/>
            <person name="Zhan M."/>
            <person name="Zhang G."/>
            <person name="Zhao Q."/>
            <person name="Zheng L."/>
            <person name="Zheng X.H."/>
            <person name="Zhong F.N."/>
            <person name="Zhong W."/>
            <person name="Zhou X."/>
            <person name="Zhu S.C."/>
            <person name="Zhu X."/>
            <person name="Smith H.O."/>
            <person name="Gibbs R.A."/>
            <person name="Myers E.W."/>
            <person name="Rubin G.M."/>
            <person name="Venter J.C."/>
        </authorList>
    </citation>
    <scope>NUCLEOTIDE SEQUENCE [LARGE SCALE GENOMIC DNA]</scope>
    <source>
        <strain>Berkeley</strain>
    </source>
</reference>
<reference key="3">
    <citation type="journal article" date="2002" name="Genome Biol.">
        <title>Annotation of the Drosophila melanogaster euchromatic genome: a systematic review.</title>
        <authorList>
            <person name="Misra S."/>
            <person name="Crosby M.A."/>
            <person name="Mungall C.J."/>
            <person name="Matthews B.B."/>
            <person name="Campbell K.S."/>
            <person name="Hradecky P."/>
            <person name="Huang Y."/>
            <person name="Kaminker J.S."/>
            <person name="Millburn G.H."/>
            <person name="Prochnik S.E."/>
            <person name="Smith C.D."/>
            <person name="Tupy J.L."/>
            <person name="Whitfield E.J."/>
            <person name="Bayraktaroglu L."/>
            <person name="Berman B.P."/>
            <person name="Bettencourt B.R."/>
            <person name="Celniker S.E."/>
            <person name="de Grey A.D.N.J."/>
            <person name="Drysdale R.A."/>
            <person name="Harris N.L."/>
            <person name="Richter J."/>
            <person name="Russo S."/>
            <person name="Schroeder A.J."/>
            <person name="Shu S.Q."/>
            <person name="Stapleton M."/>
            <person name="Yamada C."/>
            <person name="Ashburner M."/>
            <person name="Gelbart W.M."/>
            <person name="Rubin G.M."/>
            <person name="Lewis S.E."/>
        </authorList>
    </citation>
    <scope>GENOME REANNOTATION</scope>
    <source>
        <strain>Berkeley</strain>
    </source>
</reference>
<reference key="4">
    <citation type="journal article" date="2002" name="Genome Biol.">
        <title>A Drosophila full-length cDNA resource.</title>
        <authorList>
            <person name="Stapleton M."/>
            <person name="Carlson J.W."/>
            <person name="Brokstein P."/>
            <person name="Yu C."/>
            <person name="Champe M."/>
            <person name="George R.A."/>
            <person name="Guarin H."/>
            <person name="Kronmiller B."/>
            <person name="Pacleb J.M."/>
            <person name="Park S."/>
            <person name="Wan K.H."/>
            <person name="Rubin G.M."/>
            <person name="Celniker S.E."/>
        </authorList>
    </citation>
    <scope>NUCLEOTIDE SEQUENCE [LARGE SCALE MRNA]</scope>
    <source>
        <strain>Berkeley</strain>
        <tissue>Head</tissue>
    </source>
</reference>
<reference key="5">
    <citation type="journal article" date="2011" name="Science">
        <title>Direct redox regulation of F-actin assembly and disassembly by Mical.</title>
        <authorList>
            <person name="Hung R.J."/>
            <person name="Pak C.W."/>
            <person name="Terman J.R."/>
        </authorList>
    </citation>
    <scope>OXIDATION AT MET-45 AND MET-48</scope>
</reference>
<accession>P02574</accession>
<accession>Q540X7</accession>
<accession>Q9VNW5</accession>
<organism>
    <name type="scientific">Drosophila melanogaster</name>
    <name type="common">Fruit fly</name>
    <dbReference type="NCBI Taxonomy" id="7227"/>
    <lineage>
        <taxon>Eukaryota</taxon>
        <taxon>Metazoa</taxon>
        <taxon>Ecdysozoa</taxon>
        <taxon>Arthropoda</taxon>
        <taxon>Hexapoda</taxon>
        <taxon>Insecta</taxon>
        <taxon>Pterygota</taxon>
        <taxon>Neoptera</taxon>
        <taxon>Endopterygota</taxon>
        <taxon>Diptera</taxon>
        <taxon>Brachycera</taxon>
        <taxon>Muscomorpha</taxon>
        <taxon>Ephydroidea</taxon>
        <taxon>Drosophilidae</taxon>
        <taxon>Drosophila</taxon>
        <taxon>Sophophora</taxon>
    </lineage>
</organism>
<sequence>MCDEEASALVVDNGSGMCKAGFAGDDAPRAVFPSIVGRPRHQGVMVGMGQKDCYVGDEAQSKRGILSLKYPIEHGIITNWDDMEKVWHHTFYNELRVAPEEHPVLLTEAPLNPKANREKMTQIMFETFNSPAMYVAIQAVLSLYASGRTTGIVLDSGDGVSHTVPIYEGYALPHAILRLDLAGRDLTDYLMKILTERGYSFTTTAEREIVRDIKEKLCYVALDFEQEMATAAASTSLEKSYELPDGQVITIGNERFRTPEALFQPSFLGMESCGIHETVYQSIMKCDVDIRKDLYANNVLSGGTTMYPGIADRMQKEITALAPSTIKIKIIAPPERKYSVWIGGSILASLSTFQQMWISKQEYDESGPGIVHRKCF</sequence>
<gene>
    <name type="primary">Act79B</name>
    <name type="ORF">CG7478</name>
</gene>
<evidence type="ECO:0000250" key="1"/>
<evidence type="ECO:0000250" key="2">
    <source>
        <dbReference type="UniProtKB" id="P02572"/>
    </source>
</evidence>
<evidence type="ECO:0000250" key="3">
    <source>
        <dbReference type="UniProtKB" id="P68134"/>
    </source>
</evidence>
<evidence type="ECO:0000250" key="4">
    <source>
        <dbReference type="UniProtKB" id="P68137"/>
    </source>
</evidence>
<evidence type="ECO:0000269" key="5">
    <source>
    </source>
</evidence>
<evidence type="ECO:0000269" key="6">
    <source>
    </source>
</evidence>
<evidence type="ECO:0000305" key="7"/>